<feature type="initiator methionine" description="Removed" evidence="2">
    <location>
        <position position="1"/>
    </location>
</feature>
<feature type="chain" id="PRO_0000125794" description="Large ribosomal subunit protein uL1">
    <location>
        <begin position="2"/>
        <end position="212"/>
    </location>
</feature>
<reference key="1">
    <citation type="journal article" date="1990" name="Nucleic Acids Res.">
        <title>Nucleotide sequence of the genes encoding the L11, L1, L10 and L12 equivalent ribosomal proteins from the archaebacterium Halobacterium marismortui.</title>
        <authorList>
            <person name="Arndt E."/>
            <person name="Weigel C."/>
        </authorList>
    </citation>
    <scope>NUCLEOTIDE SEQUENCE [GENOMIC DNA]</scope>
</reference>
<reference key="2">
    <citation type="journal article" date="2004" name="Genome Res.">
        <title>Genome sequence of Haloarcula marismortui: a halophilic archaeon from the Dead Sea.</title>
        <authorList>
            <person name="Baliga N.S."/>
            <person name="Bonneau R."/>
            <person name="Facciotti M.T."/>
            <person name="Pan M."/>
            <person name="Glusman G."/>
            <person name="Deutsch E.W."/>
            <person name="Shannon P."/>
            <person name="Chiu Y."/>
            <person name="Weng R.S."/>
            <person name="Gan R.R."/>
            <person name="Hung P."/>
            <person name="Date S.V."/>
            <person name="Marcotte E."/>
            <person name="Hood L."/>
            <person name="Ng W.V."/>
        </authorList>
    </citation>
    <scope>NUCLEOTIDE SEQUENCE [LARGE SCALE GENOMIC DNA]</scope>
    <source>
        <strain>ATCC 43049 / DSM 3752 / JCM 8966 / VKM B-1809</strain>
    </source>
</reference>
<reference key="3">
    <citation type="journal article" date="1988" name="Biochemistry">
        <title>Extended N-terminal sequencing of proteins of archaebacterial ribosomes blotted from two-dimensional gels onto glass fiber and poly(vinylidene difluoride) membrane.</title>
        <authorList>
            <person name="Walsh M.J."/>
            <person name="McDougall J."/>
            <person name="Wittmann-Liebold B."/>
        </authorList>
    </citation>
    <scope>PROTEIN SEQUENCE OF 2-34</scope>
</reference>
<evidence type="ECO:0000255" key="1">
    <source>
        <dbReference type="HAMAP-Rule" id="MF_01318"/>
    </source>
</evidence>
<evidence type="ECO:0000269" key="2">
    <source>
    </source>
</evidence>
<evidence type="ECO:0000305" key="3"/>
<proteinExistence type="evidence at protein level"/>
<gene>
    <name evidence="1" type="primary">rpl1</name>
    <name type="ordered locus">rrnAC1415</name>
</gene>
<name>RL1_HALMA</name>
<sequence>MADQEIENAVSRALEDAPERNFRETVDLAVNLRDLDLNDPSNRVDESVVLPAGTGQETTIVVFAEGETALRAEEVADDVLDEDELEELGGDDDAAKDLADDTDFFIAEKGLMQDIGRYLGTVLGPRGKMPEPLDPDDDVVEVIERMKNTVQLRSGERRTFHTRVGAEDMSAENIADNIDVILRRLHADLEKGPLNIDTVYVKTTMGPAMEVA</sequence>
<protein>
    <recommendedName>
        <fullName evidence="1">Large ribosomal subunit protein uL1</fullName>
    </recommendedName>
    <alternativeName>
        <fullName evidence="3">50S ribosomal protein L1</fullName>
    </alternativeName>
    <alternativeName>
        <fullName>HL8</fullName>
    </alternativeName>
    <alternativeName>
        <fullName>Hmal1</fullName>
    </alternativeName>
</protein>
<comment type="function">
    <text evidence="1">Binds directly to 23S rRNA. Probably involved in E site tRNA release.</text>
</comment>
<comment type="function">
    <text evidence="1">Protein L1 is also a translational repressor protein, it controls the translation of its operon by binding to its mRNA.</text>
</comment>
<comment type="subunit">
    <text evidence="1">Part of the 50S ribosomal subunit.</text>
</comment>
<comment type="similarity">
    <text evidence="1">Belongs to the universal ribosomal protein uL1 family.</text>
</comment>
<organism>
    <name type="scientific">Haloarcula marismortui (strain ATCC 43049 / DSM 3752 / JCM 8966 / VKM B-1809)</name>
    <name type="common">Halobacterium marismortui</name>
    <dbReference type="NCBI Taxonomy" id="272569"/>
    <lineage>
        <taxon>Archaea</taxon>
        <taxon>Methanobacteriati</taxon>
        <taxon>Methanobacteriota</taxon>
        <taxon>Stenosarchaea group</taxon>
        <taxon>Halobacteria</taxon>
        <taxon>Halobacteriales</taxon>
        <taxon>Haloarculaceae</taxon>
        <taxon>Haloarcula</taxon>
    </lineage>
</organism>
<keyword id="KW-0903">Direct protein sequencing</keyword>
<keyword id="KW-1185">Reference proteome</keyword>
<keyword id="KW-0678">Repressor</keyword>
<keyword id="KW-0687">Ribonucleoprotein</keyword>
<keyword id="KW-0689">Ribosomal protein</keyword>
<keyword id="KW-0694">RNA-binding</keyword>
<keyword id="KW-0699">rRNA-binding</keyword>
<keyword id="KW-0810">Translation regulation</keyword>
<keyword id="KW-0820">tRNA-binding</keyword>
<accession>P12738</accession>
<accession>Q5V2A9</accession>
<dbReference type="EMBL" id="X51430">
    <property type="protein sequence ID" value="CAA35794.1"/>
    <property type="molecule type" value="Genomic_DNA"/>
</dbReference>
<dbReference type="EMBL" id="AY596297">
    <property type="protein sequence ID" value="AAV46343.1"/>
    <property type="molecule type" value="Genomic_DNA"/>
</dbReference>
<dbReference type="PIR" id="S08421">
    <property type="entry name" value="R5HS1"/>
</dbReference>
<dbReference type="RefSeq" id="WP_004957040.1">
    <property type="nucleotide sequence ID" value="NZ_CP039138.1"/>
</dbReference>
<dbReference type="SMR" id="P12738"/>
<dbReference type="STRING" id="272569.rrnAC1415"/>
<dbReference type="PaxDb" id="272569-rrnAC1415"/>
<dbReference type="EnsemblBacteria" id="AAV46343">
    <property type="protein sequence ID" value="AAV46343"/>
    <property type="gene ID" value="rrnAC1415"/>
</dbReference>
<dbReference type="KEGG" id="hma:rrnAC1415"/>
<dbReference type="PATRIC" id="fig|272569.17.peg.2110"/>
<dbReference type="eggNOG" id="arCOG04289">
    <property type="taxonomic scope" value="Archaea"/>
</dbReference>
<dbReference type="HOGENOM" id="CLU_062853_4_0_2"/>
<dbReference type="Proteomes" id="UP000001169">
    <property type="component" value="Chromosome I"/>
</dbReference>
<dbReference type="GO" id="GO:0015934">
    <property type="term" value="C:large ribosomal subunit"/>
    <property type="evidence" value="ECO:0007669"/>
    <property type="project" value="InterPro"/>
</dbReference>
<dbReference type="GO" id="GO:0019843">
    <property type="term" value="F:rRNA binding"/>
    <property type="evidence" value="ECO:0007669"/>
    <property type="project" value="UniProtKB-UniRule"/>
</dbReference>
<dbReference type="GO" id="GO:0003735">
    <property type="term" value="F:structural constituent of ribosome"/>
    <property type="evidence" value="ECO:0007669"/>
    <property type="project" value="InterPro"/>
</dbReference>
<dbReference type="GO" id="GO:0000049">
    <property type="term" value="F:tRNA binding"/>
    <property type="evidence" value="ECO:0007669"/>
    <property type="project" value="UniProtKB-KW"/>
</dbReference>
<dbReference type="GO" id="GO:0006417">
    <property type="term" value="P:regulation of translation"/>
    <property type="evidence" value="ECO:0007669"/>
    <property type="project" value="UniProtKB-KW"/>
</dbReference>
<dbReference type="GO" id="GO:0006412">
    <property type="term" value="P:translation"/>
    <property type="evidence" value="ECO:0007669"/>
    <property type="project" value="UniProtKB-UniRule"/>
</dbReference>
<dbReference type="CDD" id="cd00403">
    <property type="entry name" value="Ribosomal_L1"/>
    <property type="match status" value="1"/>
</dbReference>
<dbReference type="FunFam" id="3.40.50.790:FF:000005">
    <property type="entry name" value="50S ribosomal protein L1"/>
    <property type="match status" value="1"/>
</dbReference>
<dbReference type="Gene3D" id="3.30.190.20">
    <property type="match status" value="1"/>
</dbReference>
<dbReference type="Gene3D" id="3.40.50.790">
    <property type="match status" value="1"/>
</dbReference>
<dbReference type="HAMAP" id="MF_01318_A">
    <property type="entry name" value="Ribosomal_uL1_A"/>
    <property type="match status" value="1"/>
</dbReference>
<dbReference type="InterPro" id="IPR002143">
    <property type="entry name" value="Ribosomal_uL1"/>
</dbReference>
<dbReference type="InterPro" id="IPR023674">
    <property type="entry name" value="Ribosomal_uL1-like"/>
</dbReference>
<dbReference type="InterPro" id="IPR028364">
    <property type="entry name" value="Ribosomal_uL1/biogenesis"/>
</dbReference>
<dbReference type="InterPro" id="IPR016095">
    <property type="entry name" value="Ribosomal_uL1_3-a/b-sand"/>
</dbReference>
<dbReference type="InterPro" id="IPR023669">
    <property type="entry name" value="Ribosomal_uL1_arc"/>
</dbReference>
<dbReference type="InterPro" id="IPR023673">
    <property type="entry name" value="Ribosomal_uL1_CS"/>
</dbReference>
<dbReference type="NCBIfam" id="NF003244">
    <property type="entry name" value="PRK04203.1"/>
    <property type="match status" value="1"/>
</dbReference>
<dbReference type="PANTHER" id="PTHR36427">
    <property type="entry name" value="54S RIBOSOMAL PROTEIN L1, MITOCHONDRIAL"/>
    <property type="match status" value="1"/>
</dbReference>
<dbReference type="PANTHER" id="PTHR36427:SF3">
    <property type="entry name" value="LARGE RIBOSOMAL SUBUNIT PROTEIN UL1M"/>
    <property type="match status" value="1"/>
</dbReference>
<dbReference type="Pfam" id="PF00687">
    <property type="entry name" value="Ribosomal_L1"/>
    <property type="match status" value="1"/>
</dbReference>
<dbReference type="PIRSF" id="PIRSF002155">
    <property type="entry name" value="Ribosomal_L1"/>
    <property type="match status" value="1"/>
</dbReference>
<dbReference type="SUPFAM" id="SSF56808">
    <property type="entry name" value="Ribosomal protein L1"/>
    <property type="match status" value="1"/>
</dbReference>
<dbReference type="PROSITE" id="PS01199">
    <property type="entry name" value="RIBOSOMAL_L1"/>
    <property type="match status" value="1"/>
</dbReference>